<reference key="1">
    <citation type="submission" date="2007-02" db="EMBL/GenBank/DDBJ databases">
        <title>Complete sequence of Pyrobaculum calidifontis JCM 11548.</title>
        <authorList>
            <consortium name="US DOE Joint Genome Institute"/>
            <person name="Copeland A."/>
            <person name="Lucas S."/>
            <person name="Lapidus A."/>
            <person name="Barry K."/>
            <person name="Glavina del Rio T."/>
            <person name="Dalin E."/>
            <person name="Tice H."/>
            <person name="Pitluck S."/>
            <person name="Chain P."/>
            <person name="Malfatti S."/>
            <person name="Shin M."/>
            <person name="Vergez L."/>
            <person name="Schmutz J."/>
            <person name="Larimer F."/>
            <person name="Land M."/>
            <person name="Hauser L."/>
            <person name="Kyrpides N."/>
            <person name="Mikhailova N."/>
            <person name="Cozen A.E."/>
            <person name="Fitz-Gibbon S.T."/>
            <person name="House C.H."/>
            <person name="Saltikov C."/>
            <person name="Lowe T.M."/>
            <person name="Richardson P."/>
        </authorList>
    </citation>
    <scope>NUCLEOTIDE SEQUENCE [LARGE SCALE GENOMIC DNA]</scope>
    <source>
        <strain>DSM 21063 / JCM 11548 / VA1</strain>
    </source>
</reference>
<reference key="2">
    <citation type="journal article" date="2012" name="ACS Chem. Biol.">
        <title>Diversity of archaeosine synthesis in Crenarchaeota.</title>
        <authorList>
            <person name="Phillips G."/>
            <person name="Swairjo M.A."/>
            <person name="Gaston K.W."/>
            <person name="Bailly M."/>
            <person name="Limbach P.A."/>
            <person name="Iwata-Reuyl D."/>
            <person name="de Crecy-Lagard V."/>
        </authorList>
    </citation>
    <scope>FUNCTION</scope>
    <scope>PATHWAY</scope>
</reference>
<reference key="3">
    <citation type="journal article" date="2017" name="Biomolecules">
        <title>QueF-like, a non-homologous archaeosine synthase from the Crenarchaeota.</title>
        <authorList>
            <person name="Bon Ramos A."/>
            <person name="Bao L."/>
            <person name="Turner B."/>
            <person name="de Crecy-Lagard V."/>
            <person name="Iwata-Reuyl D."/>
        </authorList>
    </citation>
    <scope>FUNCTION</scope>
    <scope>CATALYTIC ACTIVITY</scope>
    <scope>SUBSTRATE SPECIFICITY</scope>
    <scope>REACTION MECHANISM</scope>
    <scope>ACTIVE SITE</scope>
</reference>
<reference evidence="9 10" key="4">
    <citation type="journal article" date="2017" name="Proteins">
        <title>Crystal structure of the archaeosine synthase QueF-like-Insights into amidino transfer and tRNA recognition by the tunnel fold.</title>
        <authorList>
            <person name="Mei X."/>
            <person name="Alvarez J."/>
            <person name="Bon Ramos A."/>
            <person name="Samanta U."/>
            <person name="Iwata-Reuyl D."/>
            <person name="Swairjo M.A."/>
        </authorList>
    </citation>
    <scope>X-RAY CRYSTALLOGRAPHY (1.94 ANGSTROMS) OF APOENZYME AND IN COMPLEX WITH PREQ0 VIA A COVALENT THIOIMIDE LINKAGE</scope>
    <scope>REACTION MECHANISM</scope>
    <scope>ACTIVE SITE</scope>
    <scope>SUBUNIT</scope>
</reference>
<accession>A3MSP1</accession>
<sequence length="109" mass="12055">MLKVSKSPSLVRLKTRGESVCPISKTVDSFEVSVEYIPRGAVLAIEEFKKMVDSYRGREILHEELAVDLLEKVKAAVNPPYVKVTVKSYYIGVEVEVVAESGGVPPVYI</sequence>
<feature type="chain" id="PRO_0000442193" description="Archaeosine synthase">
    <location>
        <begin position="1"/>
        <end position="109"/>
    </location>
</feature>
<feature type="active site" description="Thioimide intermediate" evidence="2 3">
    <location>
        <position position="21"/>
    </location>
</feature>
<feature type="active site" description="Proton donor/acceptor" evidence="6">
    <location>
        <position position="28"/>
    </location>
</feature>
<feature type="binding site" description="in other chain" evidence="2">
    <location>
        <position position="28"/>
    </location>
    <ligand>
        <name>substrate</name>
        <note>ligand shared between two adjacent subunits</note>
    </ligand>
</feature>
<feature type="binding site" evidence="2">
    <location>
        <begin position="43"/>
        <end position="46"/>
    </location>
    <ligand>
        <name>substrate</name>
        <note>ligand shared between two adjacent subunits</note>
    </ligand>
</feature>
<feature type="binding site" description="in other chain" evidence="2">
    <location>
        <begin position="62"/>
        <end position="63"/>
    </location>
    <ligand>
        <name>substrate</name>
        <note>ligand shared between two adjacent subunits</note>
    </ligand>
</feature>
<feature type="strand" evidence="12">
    <location>
        <begin position="9"/>
        <end position="20"/>
    </location>
</feature>
<feature type="turn" evidence="12">
    <location>
        <begin position="22"/>
        <end position="24"/>
    </location>
</feature>
<feature type="strand" evidence="12">
    <location>
        <begin position="26"/>
        <end position="37"/>
    </location>
</feature>
<feature type="strand" evidence="11">
    <location>
        <begin position="39"/>
        <end position="42"/>
    </location>
</feature>
<feature type="helix" evidence="12">
    <location>
        <begin position="45"/>
        <end position="53"/>
    </location>
</feature>
<feature type="turn" evidence="12">
    <location>
        <begin position="54"/>
        <end position="57"/>
    </location>
</feature>
<feature type="helix" evidence="12">
    <location>
        <begin position="62"/>
        <end position="77"/>
    </location>
</feature>
<feature type="strand" evidence="12">
    <location>
        <begin position="80"/>
        <end position="90"/>
    </location>
</feature>
<feature type="strand" evidence="12">
    <location>
        <begin position="93"/>
        <end position="102"/>
    </location>
</feature>
<organism>
    <name type="scientific">Pyrobaculum calidifontis (strain DSM 21063 / JCM 11548 / VA1)</name>
    <dbReference type="NCBI Taxonomy" id="410359"/>
    <lineage>
        <taxon>Archaea</taxon>
        <taxon>Thermoproteota</taxon>
        <taxon>Thermoprotei</taxon>
        <taxon>Thermoproteales</taxon>
        <taxon>Thermoproteaceae</taxon>
        <taxon>Pyrobaculum</taxon>
    </lineage>
</organism>
<proteinExistence type="evidence at protein level"/>
<keyword id="KW-0002">3D-structure</keyword>
<keyword id="KW-0808">Transferase</keyword>
<keyword id="KW-0819">tRNA processing</keyword>
<dbReference type="EC" id="2.6.1.-" evidence="3"/>
<dbReference type="EMBL" id="CP000561">
    <property type="protein sequence ID" value="ABO07658.1"/>
    <property type="molecule type" value="Genomic_DNA"/>
</dbReference>
<dbReference type="RefSeq" id="WP_011848915.1">
    <property type="nucleotide sequence ID" value="NC_009073.1"/>
</dbReference>
<dbReference type="PDB" id="5JYX">
    <property type="method" value="X-ray"/>
    <property type="resolution" value="2.74 A"/>
    <property type="chains" value="A/B/C/D/E/F/G/H/I/J/K/L/M/N/O=1-109"/>
</dbReference>
<dbReference type="PDB" id="5K0P">
    <property type="method" value="X-ray"/>
    <property type="resolution" value="1.94 A"/>
    <property type="chains" value="A/B/C/D/E/F/G/H/I/J=1-109"/>
</dbReference>
<dbReference type="PDBsum" id="5JYX"/>
<dbReference type="PDBsum" id="5K0P"/>
<dbReference type="SMR" id="A3MSP1"/>
<dbReference type="STRING" id="410359.Pcal_0221"/>
<dbReference type="GeneID" id="4910096"/>
<dbReference type="KEGG" id="pcl:Pcal_0221"/>
<dbReference type="eggNOG" id="arCOG04210">
    <property type="taxonomic scope" value="Archaea"/>
</dbReference>
<dbReference type="HOGENOM" id="CLU_173771_0_0_2"/>
<dbReference type="OrthoDB" id="25903at2157"/>
<dbReference type="BioCyc" id="MetaCyc:MONOMER-20299"/>
<dbReference type="BRENDA" id="2.6.1.B18">
    <property type="organism ID" value="7282"/>
</dbReference>
<dbReference type="UniPathway" id="UPA00393"/>
<dbReference type="Proteomes" id="UP000001431">
    <property type="component" value="Chromosome"/>
</dbReference>
<dbReference type="GO" id="GO:0033739">
    <property type="term" value="F:preQ1 synthase activity"/>
    <property type="evidence" value="ECO:0007669"/>
    <property type="project" value="InterPro"/>
</dbReference>
<dbReference type="GO" id="GO:0016740">
    <property type="term" value="F:transferase activity"/>
    <property type="evidence" value="ECO:0007669"/>
    <property type="project" value="UniProtKB-KW"/>
</dbReference>
<dbReference type="GO" id="GO:0008616">
    <property type="term" value="P:queuosine biosynthetic process"/>
    <property type="evidence" value="ECO:0007669"/>
    <property type="project" value="InterPro"/>
</dbReference>
<dbReference type="GO" id="GO:0008033">
    <property type="term" value="P:tRNA processing"/>
    <property type="evidence" value="ECO:0007669"/>
    <property type="project" value="UniProtKB-KW"/>
</dbReference>
<dbReference type="Gene3D" id="3.30.1130.10">
    <property type="match status" value="1"/>
</dbReference>
<dbReference type="InterPro" id="IPR043133">
    <property type="entry name" value="GTP-CH-I_C/QueF"/>
</dbReference>
<dbReference type="InterPro" id="IPR050084">
    <property type="entry name" value="NADPH_dep_7-cyano-7-deazaG_red"/>
</dbReference>
<dbReference type="InterPro" id="IPR029500">
    <property type="entry name" value="QueF"/>
</dbReference>
<dbReference type="PANTHER" id="PTHR34354">
    <property type="entry name" value="NADPH-DEPENDENT 7-CYANO-7-DEAZAGUANINE REDUCTASE"/>
    <property type="match status" value="1"/>
</dbReference>
<dbReference type="PANTHER" id="PTHR34354:SF1">
    <property type="entry name" value="NADPH-DEPENDENT 7-CYANO-7-DEAZAGUANINE REDUCTASE"/>
    <property type="match status" value="1"/>
</dbReference>
<dbReference type="Pfam" id="PF14489">
    <property type="entry name" value="QueF"/>
    <property type="match status" value="1"/>
</dbReference>
<dbReference type="SUPFAM" id="SSF55620">
    <property type="entry name" value="Tetrahydrobiopterin biosynthesis enzymes-like"/>
    <property type="match status" value="1"/>
</dbReference>
<evidence type="ECO:0000269" key="1">
    <source>
    </source>
</evidence>
<evidence type="ECO:0000269" key="2">
    <source>
    </source>
</evidence>
<evidence type="ECO:0000269" key="3">
    <source>
    </source>
</evidence>
<evidence type="ECO:0000303" key="4">
    <source>
    </source>
</evidence>
<evidence type="ECO:0000305" key="5"/>
<evidence type="ECO:0000305" key="6">
    <source>
    </source>
</evidence>
<evidence type="ECO:0000305" key="7">
    <source>
    </source>
</evidence>
<evidence type="ECO:0000312" key="8">
    <source>
        <dbReference type="EMBL" id="ABO07658.1"/>
    </source>
</evidence>
<evidence type="ECO:0007744" key="9">
    <source>
        <dbReference type="PDB" id="5JYX"/>
    </source>
</evidence>
<evidence type="ECO:0007744" key="10">
    <source>
        <dbReference type="PDB" id="5K0P"/>
    </source>
</evidence>
<evidence type="ECO:0007829" key="11">
    <source>
        <dbReference type="PDB" id="5JYX"/>
    </source>
</evidence>
<evidence type="ECO:0007829" key="12">
    <source>
        <dbReference type="PDB" id="5K0P"/>
    </source>
</evidence>
<name>QUEFL_PYRCJ</name>
<protein>
    <recommendedName>
        <fullName evidence="4">Archaeosine synthase</fullName>
        <ecNumber evidence="3">2.6.1.-</ecNumber>
    </recommendedName>
    <alternativeName>
        <fullName evidence="7">Ammonium:preQ0-tRNA aminotransferase</fullName>
    </alternativeName>
    <alternativeName>
        <fullName evidence="4">QueF-like amidinotransferase</fullName>
        <shortName evidence="4">QueF-L</shortName>
    </alternativeName>
</protein>
<gene>
    <name evidence="4" type="primary">queF-L</name>
    <name evidence="8" type="ordered locus">Pcal_0221</name>
</gene>
<comment type="function">
    <text evidence="1 3">Is responsible for the final step in the biosynthesis of archaeosine, a modified nucleoside present in the dihydrouridine loop (D-loop) of archaeal tRNA (PubMed:22032275, PubMed:28383498). Catalyzes the conversion of 7-cyano-7-deazaguanine (preQ0)-modified tRNA to archaeosine-tRNA, transforming a nitrile group to a formamidine group. Can use neither glutamine nor asparagine as amino donor in vitro, is only able to utilize free ammonium (PubMed:28383498). However, the enzyme might function in vivo with a partner that serves to generate ammonium.</text>
</comment>
<comment type="catalytic activity">
    <reaction evidence="3">
        <text>7-cyano-7-carbaguanosine(15) in tRNA + NH4(+) = archaeosine(15) in tRNA</text>
        <dbReference type="Rhea" id="RHEA:55400"/>
        <dbReference type="Rhea" id="RHEA-COMP:10371"/>
        <dbReference type="Rhea" id="RHEA-COMP:14170"/>
        <dbReference type="ChEBI" id="CHEBI:28938"/>
        <dbReference type="ChEBI" id="CHEBI:82850"/>
        <dbReference type="ChEBI" id="CHEBI:138803"/>
    </reaction>
</comment>
<comment type="pathway">
    <text evidence="1">tRNA modification; archaeosine-tRNA biosynthesis.</text>
</comment>
<comment type="subunit">
    <text evidence="2">Forms a symmetric tunnel-fold (T-fold) homodecamer of two head-to-head facing pentameric subunits, with 10 active sites at the intermonomer interfaces.</text>
</comment>
<comment type="similarity">
    <text evidence="5">Belongs to the archaeosine synthase type 2 family.</text>
</comment>